<protein>
    <recommendedName>
        <fullName evidence="1">Glucose-6-phosphate isomerase</fullName>
        <shortName evidence="1">GPI</shortName>
        <ecNumber evidence="1">5.3.1.9</ecNumber>
    </recommendedName>
    <alternativeName>
        <fullName evidence="1">Phosphoglucose isomerase</fullName>
        <shortName evidence="1">PGI</shortName>
    </alternativeName>
    <alternativeName>
        <fullName evidence="1">Phosphohexose isomerase</fullName>
        <shortName evidence="1">PHI</shortName>
    </alternativeName>
</protein>
<dbReference type="EC" id="5.3.1.9" evidence="1"/>
<dbReference type="EMBL" id="CP001048">
    <property type="protein sequence ID" value="ACC90788.1"/>
    <property type="molecule type" value="Genomic_DNA"/>
</dbReference>
<dbReference type="RefSeq" id="WP_002212085.1">
    <property type="nucleotide sequence ID" value="NZ_CP009780.1"/>
</dbReference>
<dbReference type="SMR" id="B2K4Y6"/>
<dbReference type="GeneID" id="57975003"/>
<dbReference type="KEGG" id="ypb:YPTS_3835"/>
<dbReference type="PATRIC" id="fig|502801.10.peg.3302"/>
<dbReference type="UniPathway" id="UPA00109">
    <property type="reaction ID" value="UER00181"/>
</dbReference>
<dbReference type="UniPathway" id="UPA00138"/>
<dbReference type="GO" id="GO:0005829">
    <property type="term" value="C:cytosol"/>
    <property type="evidence" value="ECO:0007669"/>
    <property type="project" value="TreeGrafter"/>
</dbReference>
<dbReference type="GO" id="GO:0097367">
    <property type="term" value="F:carbohydrate derivative binding"/>
    <property type="evidence" value="ECO:0007669"/>
    <property type="project" value="InterPro"/>
</dbReference>
<dbReference type="GO" id="GO:0004347">
    <property type="term" value="F:glucose-6-phosphate isomerase activity"/>
    <property type="evidence" value="ECO:0007669"/>
    <property type="project" value="UniProtKB-UniRule"/>
</dbReference>
<dbReference type="GO" id="GO:0048029">
    <property type="term" value="F:monosaccharide binding"/>
    <property type="evidence" value="ECO:0007669"/>
    <property type="project" value="TreeGrafter"/>
</dbReference>
<dbReference type="GO" id="GO:0006094">
    <property type="term" value="P:gluconeogenesis"/>
    <property type="evidence" value="ECO:0007669"/>
    <property type="project" value="UniProtKB-UniRule"/>
</dbReference>
<dbReference type="GO" id="GO:0051156">
    <property type="term" value="P:glucose 6-phosphate metabolic process"/>
    <property type="evidence" value="ECO:0007669"/>
    <property type="project" value="TreeGrafter"/>
</dbReference>
<dbReference type="GO" id="GO:0006096">
    <property type="term" value="P:glycolytic process"/>
    <property type="evidence" value="ECO:0007669"/>
    <property type="project" value="UniProtKB-UniRule"/>
</dbReference>
<dbReference type="CDD" id="cd05015">
    <property type="entry name" value="SIS_PGI_1"/>
    <property type="match status" value="1"/>
</dbReference>
<dbReference type="CDD" id="cd05016">
    <property type="entry name" value="SIS_PGI_2"/>
    <property type="match status" value="1"/>
</dbReference>
<dbReference type="FunFam" id="1.10.1390.10:FF:000001">
    <property type="entry name" value="Glucose-6-phosphate isomerase"/>
    <property type="match status" value="1"/>
</dbReference>
<dbReference type="FunFam" id="3.40.50.10490:FF:000004">
    <property type="entry name" value="Glucose-6-phosphate isomerase"/>
    <property type="match status" value="1"/>
</dbReference>
<dbReference type="Gene3D" id="1.10.1390.10">
    <property type="match status" value="1"/>
</dbReference>
<dbReference type="Gene3D" id="3.40.50.10490">
    <property type="entry name" value="Glucose-6-phosphate isomerase like protein, domain 1"/>
    <property type="match status" value="2"/>
</dbReference>
<dbReference type="HAMAP" id="MF_00473">
    <property type="entry name" value="G6P_isomerase"/>
    <property type="match status" value="1"/>
</dbReference>
<dbReference type="InterPro" id="IPR001672">
    <property type="entry name" value="G6P_Isomerase"/>
</dbReference>
<dbReference type="InterPro" id="IPR023096">
    <property type="entry name" value="G6P_Isomerase_C"/>
</dbReference>
<dbReference type="InterPro" id="IPR018189">
    <property type="entry name" value="Phosphoglucose_isomerase_CS"/>
</dbReference>
<dbReference type="InterPro" id="IPR046348">
    <property type="entry name" value="SIS_dom_sf"/>
</dbReference>
<dbReference type="InterPro" id="IPR035476">
    <property type="entry name" value="SIS_PGI_1"/>
</dbReference>
<dbReference type="InterPro" id="IPR035482">
    <property type="entry name" value="SIS_PGI_2"/>
</dbReference>
<dbReference type="NCBIfam" id="NF001211">
    <property type="entry name" value="PRK00179.1"/>
    <property type="match status" value="1"/>
</dbReference>
<dbReference type="PANTHER" id="PTHR11469">
    <property type="entry name" value="GLUCOSE-6-PHOSPHATE ISOMERASE"/>
    <property type="match status" value="1"/>
</dbReference>
<dbReference type="PANTHER" id="PTHR11469:SF1">
    <property type="entry name" value="GLUCOSE-6-PHOSPHATE ISOMERASE"/>
    <property type="match status" value="1"/>
</dbReference>
<dbReference type="Pfam" id="PF00342">
    <property type="entry name" value="PGI"/>
    <property type="match status" value="1"/>
</dbReference>
<dbReference type="PRINTS" id="PR00662">
    <property type="entry name" value="G6PISOMERASE"/>
</dbReference>
<dbReference type="SUPFAM" id="SSF53697">
    <property type="entry name" value="SIS domain"/>
    <property type="match status" value="1"/>
</dbReference>
<dbReference type="PROSITE" id="PS00765">
    <property type="entry name" value="P_GLUCOSE_ISOMERASE_1"/>
    <property type="match status" value="1"/>
</dbReference>
<dbReference type="PROSITE" id="PS00174">
    <property type="entry name" value="P_GLUCOSE_ISOMERASE_2"/>
    <property type="match status" value="1"/>
</dbReference>
<dbReference type="PROSITE" id="PS51463">
    <property type="entry name" value="P_GLUCOSE_ISOMERASE_3"/>
    <property type="match status" value="1"/>
</dbReference>
<name>G6PI_YERPB</name>
<accession>B2K4Y6</accession>
<feature type="chain" id="PRO_1000125779" description="Glucose-6-phosphate isomerase">
    <location>
        <begin position="1"/>
        <end position="548"/>
    </location>
</feature>
<feature type="active site" description="Proton donor" evidence="1">
    <location>
        <position position="355"/>
    </location>
</feature>
<feature type="active site" evidence="1">
    <location>
        <position position="386"/>
    </location>
</feature>
<feature type="active site" evidence="1">
    <location>
        <position position="514"/>
    </location>
</feature>
<sequence>MKNINPSQTAAWKALQQHFEQMKDVTISSLFAKDDQRFNRFSATFDDQMLVDFSKNRITSETLEKLQDLAKETDLAGAIKSMFSGEKINRTEDRAVLHIALRNRSNTPIVVDGKDVMPEVNAVLAKMKQFCDRVISGDWKGYTGKAITDVVNIGIGGSDLGPYMVTEALRPYKNHLNMHFVSNVDGTHIAEALKPLNPETTLFLVASKTFTTQETMTNAHSARDWFLSAAGDPAHVAKHFAALSTNAKAVGEFGIDTNNMFEFWDWVGGRYSLWSAIGLSIALSVGFEHFEQLLSGAHAMDKHFAETPAEKNLPVLLALIGIWYNNFFGAETEAILPYDQYMHRFPAYFQQGNMESNGKYVDRNGHPVDYQTGPIIWGEPGTNGQHAFYQLIHQGTKLIPCDFIAPAISHNPLSDHHAKLLSNFFAQTEALAFGKSLEDVEAEFAAAGKTPEQVAHVAPFKVFEGNRPTNSILLREITPFSLGALIALYEHKIFTQGVILNIYTFDQWGVELGKQLANRILPELADDQEVTSHDSSTNALINRFKNWR</sequence>
<comment type="function">
    <text evidence="1">Catalyzes the reversible isomerization of glucose-6-phosphate to fructose-6-phosphate.</text>
</comment>
<comment type="catalytic activity">
    <reaction evidence="1">
        <text>alpha-D-glucose 6-phosphate = beta-D-fructose 6-phosphate</text>
        <dbReference type="Rhea" id="RHEA:11816"/>
        <dbReference type="ChEBI" id="CHEBI:57634"/>
        <dbReference type="ChEBI" id="CHEBI:58225"/>
        <dbReference type="EC" id="5.3.1.9"/>
    </reaction>
</comment>
<comment type="pathway">
    <text evidence="1">Carbohydrate biosynthesis; gluconeogenesis.</text>
</comment>
<comment type="pathway">
    <text evidence="1">Carbohydrate degradation; glycolysis; D-glyceraldehyde 3-phosphate and glycerone phosphate from D-glucose: step 2/4.</text>
</comment>
<comment type="subcellular location">
    <subcellularLocation>
        <location evidence="1">Cytoplasm</location>
    </subcellularLocation>
</comment>
<comment type="similarity">
    <text evidence="1">Belongs to the GPI family.</text>
</comment>
<gene>
    <name evidence="1" type="primary">pgi</name>
    <name type="ordered locus">YPTS_3835</name>
</gene>
<organism>
    <name type="scientific">Yersinia pseudotuberculosis serotype IB (strain PB1/+)</name>
    <dbReference type="NCBI Taxonomy" id="502801"/>
    <lineage>
        <taxon>Bacteria</taxon>
        <taxon>Pseudomonadati</taxon>
        <taxon>Pseudomonadota</taxon>
        <taxon>Gammaproteobacteria</taxon>
        <taxon>Enterobacterales</taxon>
        <taxon>Yersiniaceae</taxon>
        <taxon>Yersinia</taxon>
    </lineage>
</organism>
<reference key="1">
    <citation type="submission" date="2008-04" db="EMBL/GenBank/DDBJ databases">
        <title>Complete sequence of Yersinia pseudotuberculosis PB1/+.</title>
        <authorList>
            <person name="Copeland A."/>
            <person name="Lucas S."/>
            <person name="Lapidus A."/>
            <person name="Glavina del Rio T."/>
            <person name="Dalin E."/>
            <person name="Tice H."/>
            <person name="Bruce D."/>
            <person name="Goodwin L."/>
            <person name="Pitluck S."/>
            <person name="Munk A.C."/>
            <person name="Brettin T."/>
            <person name="Detter J.C."/>
            <person name="Han C."/>
            <person name="Tapia R."/>
            <person name="Schmutz J."/>
            <person name="Larimer F."/>
            <person name="Land M."/>
            <person name="Hauser L."/>
            <person name="Challacombe J.F."/>
            <person name="Green L."/>
            <person name="Lindler L.E."/>
            <person name="Nikolich M.P."/>
            <person name="Richardson P."/>
        </authorList>
    </citation>
    <scope>NUCLEOTIDE SEQUENCE [LARGE SCALE GENOMIC DNA]</scope>
    <source>
        <strain>PB1/+</strain>
    </source>
</reference>
<proteinExistence type="inferred from homology"/>
<keyword id="KW-0963">Cytoplasm</keyword>
<keyword id="KW-0312">Gluconeogenesis</keyword>
<keyword id="KW-0324">Glycolysis</keyword>
<keyword id="KW-0413">Isomerase</keyword>
<evidence type="ECO:0000255" key="1">
    <source>
        <dbReference type="HAMAP-Rule" id="MF_00473"/>
    </source>
</evidence>